<reference key="1">
    <citation type="journal article" date="1995" name="Appl. Environ. Microbiol.">
        <title>A xylan hydrolase gene cluster in Prevotella ruminicola B(1)4: sequence relationships, synergistic interactions, and oxygen sensitivity of a novel enzyme with exoxylanase and beta-(1,4)-xylosidase activities.</title>
        <authorList>
            <person name="Gasparic A."/>
            <person name="Martin J."/>
            <person name="Daniel A.S."/>
            <person name="Flint H.J."/>
        </authorList>
    </citation>
    <scope>NUCLEOTIDE SEQUENCE [GENOMIC DNA]</scope>
    <source>
        <strain>B14</strain>
    </source>
</reference>
<sequence length="319" mass="36407">MKAKYVFPSDYMADPAANVFDGKLYIYPSHDYDSGECFDDDGGHFQMKDYHVLCIDGDPMEQDAKDCGKQFGIEDIPWVEKQLWDNDCVEKDGKYYLIYSAKDYTGVFHLGVAVADKPEGPFVPEADPIRGSYSIDPCVFKDDDGEIYVYFGGIWGGQLQWYKDNKMLKAEHLPEGKEDPLPSRVARMTGDVKQFAEAPRAVIIVDETGKPLPADDPHRFFEASWMHKYNGKYYFSYSTGDTHLLCYAVGDNPYGPFTYQGVILEPVVGWTTHHSIVEYKGKWYLFHHDCVPSNDTTWLRSLKVAELEYDAEGHIKTVK</sequence>
<proteinExistence type="inferred from homology"/>
<keyword id="KW-0119">Carbohydrate metabolism</keyword>
<keyword id="KW-0326">Glycosidase</keyword>
<keyword id="KW-0378">Hydrolase</keyword>
<keyword id="KW-0511">Multifunctional enzyme</keyword>
<keyword id="KW-0624">Polysaccharide degradation</keyword>
<keyword id="KW-0858">Xylan degradation</keyword>
<evidence type="ECO:0000250" key="1">
    <source>
        <dbReference type="UniProtKB" id="Q45071"/>
    </source>
</evidence>
<evidence type="ECO:0000305" key="2"/>
<gene>
    <name type="primary">xynB</name>
</gene>
<dbReference type="EC" id="3.2.1.37"/>
<dbReference type="EMBL" id="Z49241">
    <property type="protein sequence ID" value="CAA89208.1"/>
    <property type="molecule type" value="Genomic_DNA"/>
</dbReference>
<dbReference type="SMR" id="P48791"/>
<dbReference type="CAZy" id="GH43">
    <property type="family name" value="Glycoside Hydrolase Family 43"/>
</dbReference>
<dbReference type="GO" id="GO:0009044">
    <property type="term" value="F:xylan 1,4-beta-xylosidase activity"/>
    <property type="evidence" value="ECO:0007669"/>
    <property type="project" value="UniProtKB-EC"/>
</dbReference>
<dbReference type="GO" id="GO:0045493">
    <property type="term" value="P:xylan catabolic process"/>
    <property type="evidence" value="ECO:0007669"/>
    <property type="project" value="UniProtKB-KW"/>
</dbReference>
<dbReference type="CDD" id="cd18619">
    <property type="entry name" value="GH43_CoXyl43_like"/>
    <property type="match status" value="1"/>
</dbReference>
<dbReference type="Gene3D" id="2.115.10.20">
    <property type="entry name" value="Glycosyl hydrolase domain, family 43"/>
    <property type="match status" value="1"/>
</dbReference>
<dbReference type="InterPro" id="IPR006710">
    <property type="entry name" value="Glyco_hydro_43"/>
</dbReference>
<dbReference type="InterPro" id="IPR023296">
    <property type="entry name" value="Glyco_hydro_beta-prop_sf"/>
</dbReference>
<dbReference type="InterPro" id="IPR052176">
    <property type="entry name" value="Glycosyl_Hydrlase_43_Enz"/>
</dbReference>
<dbReference type="PANTHER" id="PTHR43772">
    <property type="entry name" value="ENDO-1,4-BETA-XYLANASE"/>
    <property type="match status" value="1"/>
</dbReference>
<dbReference type="PANTHER" id="PTHR43772:SF2">
    <property type="entry name" value="PUTATIVE (AFU_ORTHOLOGUE AFUA_2G04480)-RELATED"/>
    <property type="match status" value="1"/>
</dbReference>
<dbReference type="Pfam" id="PF04616">
    <property type="entry name" value="Glyco_hydro_43"/>
    <property type="match status" value="1"/>
</dbReference>
<dbReference type="SUPFAM" id="SSF75005">
    <property type="entry name" value="Arabinanase/levansucrase/invertase"/>
    <property type="match status" value="1"/>
</dbReference>
<organism>
    <name type="scientific">Xylanibacter ruminicola</name>
    <name type="common">Prevotella ruminicola</name>
    <dbReference type="NCBI Taxonomy" id="839"/>
    <lineage>
        <taxon>Bacteria</taxon>
        <taxon>Pseudomonadati</taxon>
        <taxon>Bacteroidota</taxon>
        <taxon>Bacteroidia</taxon>
        <taxon>Bacteroidales</taxon>
        <taxon>Prevotellaceae</taxon>
        <taxon>Xylanibacter</taxon>
    </lineage>
</organism>
<feature type="chain" id="PRO_0000057696" description="Beta-xylosidase">
    <location>
        <begin position="1"/>
        <end position="319"/>
    </location>
</feature>
<feature type="active site" description="Proton acceptor" evidence="1">
    <location>
        <position position="14"/>
    </location>
</feature>
<feature type="active site" description="Proton donor" evidence="1">
    <location>
        <position position="222"/>
    </location>
</feature>
<feature type="site" description="Important for catalytic activity, responsible for pKa modulation of the active site Glu and correct orientation of both the proton donor and substrate" evidence="1">
    <location>
        <position position="136"/>
    </location>
</feature>
<comment type="function">
    <text>Exoxylanase capable of acting on certain xylans and xylooligosaccharides.</text>
</comment>
<comment type="catalytic activity">
    <reaction>
        <text>Hydrolysis of (1-&gt;4)-beta-D-xylans, to remove successive D-xylose residues from the non-reducing termini.</text>
        <dbReference type="EC" id="3.2.1.37"/>
    </reaction>
</comment>
<comment type="similarity">
    <text evidence="2">Belongs to the glycosyl hydrolase 43 family.</text>
</comment>
<protein>
    <recommendedName>
        <fullName>Beta-xylosidase</fullName>
        <ecNumber>3.2.1.37</ecNumber>
    </recommendedName>
    <alternativeName>
        <fullName>1,4-beta-D-xylan xylohydrolase</fullName>
    </alternativeName>
    <alternativeName>
        <fullName>Exo-beta-(1,4)-xylanase</fullName>
    </alternativeName>
    <alternativeName>
        <fullName>Xylan 1,4-beta-xylosidase</fullName>
    </alternativeName>
</protein>
<accession>P48791</accession>
<name>XYNB_XYLRU</name>